<evidence type="ECO:0000255" key="1">
    <source>
        <dbReference type="HAMAP-Rule" id="MF_01625"/>
    </source>
</evidence>
<evidence type="ECO:0000305" key="2"/>
<feature type="chain" id="PRO_0000292352" description="Regulatory ATPase RavA">
    <location>
        <begin position="1"/>
        <end position="498"/>
    </location>
</feature>
<feature type="binding site" evidence="1">
    <location>
        <position position="23"/>
    </location>
    <ligand>
        <name>ADP</name>
        <dbReference type="ChEBI" id="CHEBI:456216"/>
    </ligand>
</feature>
<feature type="binding site" evidence="1">
    <location>
        <position position="49"/>
    </location>
    <ligand>
        <name>ADP</name>
        <dbReference type="ChEBI" id="CHEBI:456216"/>
    </ligand>
</feature>
<feature type="binding site" evidence="1">
    <location>
        <position position="50"/>
    </location>
    <ligand>
        <name>ADP</name>
        <dbReference type="ChEBI" id="CHEBI:456216"/>
    </ligand>
</feature>
<feature type="binding site" evidence="1">
    <location>
        <position position="51"/>
    </location>
    <ligand>
        <name>ADP</name>
        <dbReference type="ChEBI" id="CHEBI:456216"/>
    </ligand>
</feature>
<feature type="binding site" evidence="1">
    <location>
        <position position="52"/>
    </location>
    <ligand>
        <name>ADP</name>
        <dbReference type="ChEBI" id="CHEBI:456216"/>
    </ligand>
</feature>
<feature type="binding site" evidence="1">
    <location>
        <position position="53"/>
    </location>
    <ligand>
        <name>ADP</name>
        <dbReference type="ChEBI" id="CHEBI:456216"/>
    </ligand>
</feature>
<feature type="binding site" evidence="1">
    <location>
        <position position="54"/>
    </location>
    <ligand>
        <name>ADP</name>
        <dbReference type="ChEBI" id="CHEBI:456216"/>
    </ligand>
</feature>
<feature type="binding site" evidence="1">
    <location>
        <position position="196"/>
    </location>
    <ligand>
        <name>ADP</name>
        <dbReference type="ChEBI" id="CHEBI:456216"/>
    </ligand>
</feature>
<keyword id="KW-0067">ATP-binding</keyword>
<keyword id="KW-0143">Chaperone</keyword>
<keyword id="KW-0963">Cytoplasm</keyword>
<keyword id="KW-0378">Hydrolase</keyword>
<keyword id="KW-0547">Nucleotide-binding</keyword>
<gene>
    <name evidence="1" type="primary">ravA</name>
    <name type="ordered locus">SFV_3772</name>
</gene>
<dbReference type="EC" id="3.6.1.-" evidence="1"/>
<dbReference type="EMBL" id="CP000266">
    <property type="protein sequence ID" value="ABF05785.1"/>
    <property type="status" value="ALT_INIT"/>
    <property type="molecule type" value="Genomic_DNA"/>
</dbReference>
<dbReference type="RefSeq" id="WP_005097542.1">
    <property type="nucleotide sequence ID" value="NC_008258.1"/>
</dbReference>
<dbReference type="SMR" id="Q0SYT0"/>
<dbReference type="KEGG" id="sfv:SFV_3772"/>
<dbReference type="HOGENOM" id="CLU_018678_1_0_6"/>
<dbReference type="Proteomes" id="UP000000659">
    <property type="component" value="Chromosome"/>
</dbReference>
<dbReference type="GO" id="GO:0005737">
    <property type="term" value="C:cytoplasm"/>
    <property type="evidence" value="ECO:0007669"/>
    <property type="project" value="UniProtKB-SubCell"/>
</dbReference>
<dbReference type="GO" id="GO:0005524">
    <property type="term" value="F:ATP binding"/>
    <property type="evidence" value="ECO:0007669"/>
    <property type="project" value="UniProtKB-KW"/>
</dbReference>
<dbReference type="GO" id="GO:0016887">
    <property type="term" value="F:ATP hydrolysis activity"/>
    <property type="evidence" value="ECO:0007669"/>
    <property type="project" value="UniProtKB-UniRule"/>
</dbReference>
<dbReference type="CDD" id="cd00009">
    <property type="entry name" value="AAA"/>
    <property type="match status" value="1"/>
</dbReference>
<dbReference type="FunFam" id="3.40.50.300:FF:000410">
    <property type="entry name" value="ATPase RavA"/>
    <property type="match status" value="1"/>
</dbReference>
<dbReference type="Gene3D" id="1.20.58.1510">
    <property type="match status" value="1"/>
</dbReference>
<dbReference type="Gene3D" id="2.40.128.430">
    <property type="match status" value="1"/>
</dbReference>
<dbReference type="Gene3D" id="3.40.50.300">
    <property type="entry name" value="P-loop containing nucleotide triphosphate hydrolases"/>
    <property type="match status" value="1"/>
</dbReference>
<dbReference type="HAMAP" id="MF_01625">
    <property type="entry name" value="ATPase_RavA"/>
    <property type="match status" value="1"/>
</dbReference>
<dbReference type="InterPro" id="IPR003593">
    <property type="entry name" value="AAA+_ATPase"/>
</dbReference>
<dbReference type="InterPro" id="IPR023671">
    <property type="entry name" value="ATPase_RavA"/>
</dbReference>
<dbReference type="InterPro" id="IPR022547">
    <property type="entry name" value="ATPase_RavA_C"/>
</dbReference>
<dbReference type="InterPro" id="IPR045427">
    <property type="entry name" value="MoxR"/>
</dbReference>
<dbReference type="InterPro" id="IPR027417">
    <property type="entry name" value="P-loop_NTPase"/>
</dbReference>
<dbReference type="InterPro" id="IPR041538">
    <property type="entry name" value="RavA-like_AAA_lid"/>
</dbReference>
<dbReference type="InterPro" id="IPR050513">
    <property type="entry name" value="RavA_ATPases"/>
</dbReference>
<dbReference type="InterPro" id="IPR046898">
    <property type="entry name" value="RavA_LARA_dom"/>
</dbReference>
<dbReference type="InterPro" id="IPR046932">
    <property type="entry name" value="RavA_LARA_sf"/>
</dbReference>
<dbReference type="NCBIfam" id="NF010054">
    <property type="entry name" value="PRK13531.1"/>
    <property type="match status" value="1"/>
</dbReference>
<dbReference type="PANTHER" id="PTHR32204">
    <property type="entry name" value="ATPASE RAVA"/>
    <property type="match status" value="1"/>
</dbReference>
<dbReference type="PANTHER" id="PTHR32204:SF0">
    <property type="entry name" value="ATPASE RAVA"/>
    <property type="match status" value="1"/>
</dbReference>
<dbReference type="Pfam" id="PF17868">
    <property type="entry name" value="AAA_lid_8"/>
    <property type="match status" value="1"/>
</dbReference>
<dbReference type="Pfam" id="PF12592">
    <property type="entry name" value="ATPase_RavA_C"/>
    <property type="match status" value="1"/>
</dbReference>
<dbReference type="Pfam" id="PF20030">
    <property type="entry name" value="bpMoxR"/>
    <property type="match status" value="1"/>
</dbReference>
<dbReference type="Pfam" id="PF20265">
    <property type="entry name" value="LARA_dom"/>
    <property type="match status" value="1"/>
</dbReference>
<dbReference type="SMART" id="SM00382">
    <property type="entry name" value="AAA"/>
    <property type="match status" value="1"/>
</dbReference>
<dbReference type="SUPFAM" id="SSF52540">
    <property type="entry name" value="P-loop containing nucleoside triphosphate hydrolases"/>
    <property type="match status" value="1"/>
</dbReference>
<reference key="1">
    <citation type="journal article" date="2006" name="BMC Genomics">
        <title>Complete genome sequence of Shigella flexneri 5b and comparison with Shigella flexneri 2a.</title>
        <authorList>
            <person name="Nie H."/>
            <person name="Yang F."/>
            <person name="Zhang X."/>
            <person name="Yang J."/>
            <person name="Chen L."/>
            <person name="Wang J."/>
            <person name="Xiong Z."/>
            <person name="Peng J."/>
            <person name="Sun L."/>
            <person name="Dong J."/>
            <person name="Xue Y."/>
            <person name="Xu X."/>
            <person name="Chen S."/>
            <person name="Yao Z."/>
            <person name="Shen Y."/>
            <person name="Jin Q."/>
        </authorList>
    </citation>
    <scope>NUCLEOTIDE SEQUENCE [LARGE SCALE GENOMIC DNA]</scope>
    <source>
        <strain>8401</strain>
    </source>
</reference>
<name>RAVA_SHIF8</name>
<protein>
    <recommendedName>
        <fullName evidence="1">Regulatory ATPase RavA</fullName>
        <ecNumber evidence="1">3.6.1.-</ecNumber>
    </recommendedName>
    <alternativeName>
        <fullName evidence="1">Regulatory ATPase variant A</fullName>
    </alternativeName>
</protein>
<comment type="function">
    <text evidence="1">Component of the RavA-ViaA chaperone complex, which may act on the membrane to optimize the function of some of the respiratory chains. RavA functions as an ATPase.</text>
</comment>
<comment type="catalytic activity">
    <reaction evidence="1">
        <text>ATP + H2O = ADP + phosphate + H(+)</text>
        <dbReference type="Rhea" id="RHEA:13065"/>
        <dbReference type="ChEBI" id="CHEBI:15377"/>
        <dbReference type="ChEBI" id="CHEBI:15378"/>
        <dbReference type="ChEBI" id="CHEBI:30616"/>
        <dbReference type="ChEBI" id="CHEBI:43474"/>
        <dbReference type="ChEBI" id="CHEBI:456216"/>
    </reaction>
</comment>
<comment type="activity regulation">
    <text evidence="1">ATPase activity is stimulated by ViaA.</text>
</comment>
<comment type="subunit">
    <text evidence="1">Homohexamer. Interacts with ViaA.</text>
</comment>
<comment type="subcellular location">
    <subcellularLocation>
        <location evidence="1">Cytoplasm</location>
    </subcellularLocation>
</comment>
<comment type="similarity">
    <text evidence="1">Belongs to the RavA family.</text>
</comment>
<comment type="sequence caution" evidence="2">
    <conflict type="erroneous initiation">
        <sequence resource="EMBL-CDS" id="ABF05785"/>
    </conflict>
</comment>
<organism>
    <name type="scientific">Shigella flexneri serotype 5b (strain 8401)</name>
    <dbReference type="NCBI Taxonomy" id="373384"/>
    <lineage>
        <taxon>Bacteria</taxon>
        <taxon>Pseudomonadati</taxon>
        <taxon>Pseudomonadota</taxon>
        <taxon>Gammaproteobacteria</taxon>
        <taxon>Enterobacterales</taxon>
        <taxon>Enterobacteriaceae</taxon>
        <taxon>Shigella</taxon>
    </lineage>
</organism>
<proteinExistence type="inferred from homology"/>
<sequence>MAHPHLLAERISRLSSSLEKGLYERSHAIRLCLLAALSGESVFLLGPPGIAKSLIARRLKFAFQNARAFEYLMTRFSTPEEVFGPLSIQALKDEGRYERLTSGYLPEAEIVFLDEIWKAGPAILNTLLTAINERQFRNGAHVEKIPMRLLVAASNELPEADSSLEALYDRMLIRLWLDKVQDKANFRSMLTSQQDENDNPVPDALQVTDEEYERWQKEIGEITLPDHVFELIFMLRQQLDKLPDAPYVSDRRWKKAIRLLQASAFFSGRSAVAPVDLILLKDCLWYDAQSLNLIQQQIDVLMTGHAWQQQGMLTRLGAIVQRHLQLQQQQSDKTALTLIRLGGIFSRRQQYQLPVNVTASTLTLLLQKPLKLHDMEVVHISFERSALEQWLSKGGEIRGKLNGIGFAQKLNLEVDSTQHLVVRDVSLQGSTLALPGSSAEGLPGEIKQQLEELESDWRKQHALFSEQQKCLFIPGDWLGRIEDSLQDVGAQIRQAQQC</sequence>
<accession>Q0SYT0</accession>